<sequence length="167" mass="19235">MLVLLAFIIAFHITSAALLFIATIDNAWWVGDEFFADVWRICTNNTNCTVINDSFQEYSTLQAVQATMILSTILCCIAFFIFVLQLFRLKQGERFVLTSIIQLMSCLCVMIAASIYTDRREDIHHKNAKFYPVTREGSYGYSYILAWVAFACTFISGMMYLILRKRK</sequence>
<reference key="1">
    <citation type="journal article" date="2007" name="Gene">
        <title>Mapping of chimpanzee full-length cDNAs onto the human genome unveils large potential divergence of the transcriptome.</title>
        <authorList>
            <person name="Sakate R."/>
            <person name="Suto Y."/>
            <person name="Imanishi T."/>
            <person name="Tanoue T."/>
            <person name="Hida M."/>
            <person name="Hayasaka I."/>
            <person name="Kusuda J."/>
            <person name="Gojobori T."/>
            <person name="Hashimoto K."/>
            <person name="Hirai M."/>
        </authorList>
    </citation>
    <scope>NUCLEOTIDE SEQUENCE [MRNA]</scope>
    <source>
        <tissue>Skin</tissue>
    </source>
</reference>
<gene>
    <name type="primary">EMP2</name>
</gene>
<feature type="chain" id="PRO_0000297551" description="Epithelial membrane protein 2">
    <location>
        <begin position="1"/>
        <end position="167"/>
    </location>
</feature>
<feature type="transmembrane region" description="Helical" evidence="5">
    <location>
        <begin position="1"/>
        <end position="21"/>
    </location>
</feature>
<feature type="transmembrane region" description="Helical" evidence="5">
    <location>
        <begin position="67"/>
        <end position="87"/>
    </location>
</feature>
<feature type="transmembrane region" description="Helical" evidence="5">
    <location>
        <begin position="95"/>
        <end position="115"/>
    </location>
</feature>
<feature type="transmembrane region" description="Helical" evidence="5">
    <location>
        <begin position="143"/>
        <end position="163"/>
    </location>
</feature>
<feature type="glycosylation site" description="N-linked (GlcNAc...) asparagine" evidence="5">
    <location>
        <position position="44"/>
    </location>
</feature>
<feature type="glycosylation site" description="N-linked (GlcNAc...) asparagine" evidence="5">
    <location>
        <position position="47"/>
    </location>
</feature>
<feature type="glycosylation site" description="N-linked (GlcNAc...) asparagine" evidence="5">
    <location>
        <position position="52"/>
    </location>
</feature>
<keyword id="KW-1003">Cell membrane</keyword>
<keyword id="KW-0963">Cytoplasm</keyword>
<keyword id="KW-0325">Glycoprotein</keyword>
<keyword id="KW-0333">Golgi apparatus</keyword>
<keyword id="KW-0472">Membrane</keyword>
<keyword id="KW-0539">Nucleus</keyword>
<keyword id="KW-1185">Reference proteome</keyword>
<keyword id="KW-0812">Transmembrane</keyword>
<keyword id="KW-1133">Transmembrane helix</keyword>
<comment type="function">
    <text evidence="1 2 3">Functions as a key regulator of cell membrane composition by regulating protein surface expression. Also, plays a role in regulation of processes including cell migration, cell proliferation, cell contraction and cell adhesion. Regulates transepithelial migration of neutrophils into the alveolar lumen, potentially via mediation of cell surface expression of adhesion markers and lipid raft formation (By similarity). Negatively regulates caveolae formation by reducing CAV1 expression and CAV1 amount by increasing lysosomal degradation (By similarity). Facilitates surface trafficking and the formation of lipid rafts bearing GPI-anchor proteins (By similarity). Regulates surface expression of MHC1 and ICAM1 proteins increasing susceptibility to T-cell mediated cytotoxicity (By similarity). Regulates the plasma membrane expression of the integrin heterodimers ITGA6-ITGB1, ITGA5-ITGB3 and ITGA5-ITGB1 resulting in modulation of cell-matrix adhesion (By similarity). Also regulates many processes through PTK2 (By similarity). Regulates blood vessel endothelial cell migration and angiogenesis by regulating VEGF protein expression through PTK2 activation (By similarity). Regulates cell migration and cell contraction through PTK2 and SRC activation. Regulates focal adhesion density, F-actin conformation and cell adhesion capacity through interaction with PTK2 (By similarity). Positively regulates cell proliferation (By similarity). Plays a role during cell death and cell blebbing (By similarity). Promotes angiogenesis and vasculogenesis through induction of VEGFA via a HIF1A-dependent pathway (By similarity). Also plays a role in embryo implantation by regulating surface trafficking of integrin heterodimer ITGA5-ITGB3 (By similarity). Plays a role in placental angiogenesis and uterine natural killer cell regulation at the maternal-fetal placental interface, however not required in the maternal tissues for a viable pregnancy (By similarity). Involved in the early stages of embryogenic development and cardiogenesis, potentially via regulation of epithelial-mesenchymal transition timing (By similarity). May play a role in glomerular filtration (By similarity).</text>
</comment>
<comment type="subunit">
    <text evidence="2 3">Interacts with PTK2; regulates PTK2 activation and localization (By similarity). Interacts with ITGB3; regulates the levels of the heterodimer ITGA5-ITGB3 integrin surface expression (By similarity). Interacts with P2RX7 (via C-terminus) (By similarity). Interacts with ITGB1; the interaction may be direct or indirect and ITGB1 has a heterodimer form (By similarity).</text>
</comment>
<comment type="subcellular location">
    <subcellularLocation>
        <location evidence="2">Golgi apparatus membrane</location>
        <topology evidence="5">Multi-pass membrane protein</topology>
    </subcellularLocation>
    <subcellularLocation>
        <location evidence="2 3">Cell membrane</location>
    </subcellularLocation>
    <subcellularLocation>
        <location evidence="2">Apical cell membrane</location>
    </subcellularLocation>
    <subcellularLocation>
        <location evidence="2 3">Membrane raft</location>
    </subcellularLocation>
    <subcellularLocation>
        <location evidence="2 3 4">Cytoplasm</location>
    </subcellularLocation>
    <subcellularLocation>
        <location evidence="4">Nucleus</location>
    </subcellularLocation>
    <subcellularLocation>
        <location evidence="2">Cytoplasm</location>
        <location evidence="2">Perinuclear region</location>
    </subcellularLocation>
    <text evidence="2 4">Localizes in cytoplasm, foot processes and cell bodies of podocytes and nucleus of endothelial cells of kidney. Localizes to the apical cell surface in the luminal epithelium and glandular epithelium. Colocalized with ITGB1 and GPI-anchor proteins on plasma membrane on plasma membrane.</text>
</comment>
<comment type="similarity">
    <text evidence="6">Belongs to the PMP-22/EMP/MP20 family.</text>
</comment>
<protein>
    <recommendedName>
        <fullName>Epithelial membrane protein 2</fullName>
        <shortName>EMP-2</shortName>
    </recommendedName>
</protein>
<proteinExistence type="evidence at transcript level"/>
<dbReference type="EMBL" id="AB222164">
    <property type="protein sequence ID" value="BAF62409.1"/>
    <property type="molecule type" value="mRNA"/>
</dbReference>
<dbReference type="RefSeq" id="NP_001098709.1">
    <property type="nucleotide sequence ID" value="NM_001105239.1"/>
</dbReference>
<dbReference type="RefSeq" id="XP_009428554.1">
    <property type="nucleotide sequence ID" value="XM_009430279.5"/>
</dbReference>
<dbReference type="RefSeq" id="XP_016783942.1">
    <property type="nucleotide sequence ID" value="XM_016928453.4"/>
</dbReference>
<dbReference type="SMR" id="A5A6N6"/>
<dbReference type="FunCoup" id="A5A6N6">
    <property type="interactions" value="483"/>
</dbReference>
<dbReference type="STRING" id="9598.ENSPTRP00000090573"/>
<dbReference type="GlyCosmos" id="A5A6N6">
    <property type="glycosylation" value="3 sites, No reported glycans"/>
</dbReference>
<dbReference type="PaxDb" id="9598-ENSPTRP00000013245"/>
<dbReference type="Ensembl" id="ENSPTRT00000091043.1">
    <property type="protein sequence ID" value="ENSPTRP00000090573.1"/>
    <property type="gene ID" value="ENSPTRG00000007756.6"/>
</dbReference>
<dbReference type="GeneID" id="453910"/>
<dbReference type="KEGG" id="ptr:453910"/>
<dbReference type="CTD" id="2013"/>
<dbReference type="VGNC" id="VGNC:13702">
    <property type="gene designation" value="EMP2"/>
</dbReference>
<dbReference type="eggNOG" id="ENOG502RYYE">
    <property type="taxonomic scope" value="Eukaryota"/>
</dbReference>
<dbReference type="GeneTree" id="ENSGT00950000182696"/>
<dbReference type="HOGENOM" id="CLU_138632_0_0_1"/>
<dbReference type="InParanoid" id="A5A6N6"/>
<dbReference type="OMA" id="VAWVSFP"/>
<dbReference type="OrthoDB" id="9652at9604"/>
<dbReference type="TreeFam" id="TF330414"/>
<dbReference type="Proteomes" id="UP000002277">
    <property type="component" value="Chromosome 16"/>
</dbReference>
<dbReference type="Bgee" id="ENSPTRG00000007756">
    <property type="expression patterns" value="Expressed in lung and 21 other cell types or tissues"/>
</dbReference>
<dbReference type="GO" id="GO:0045177">
    <property type="term" value="C:apical part of cell"/>
    <property type="evidence" value="ECO:0000250"/>
    <property type="project" value="UniProtKB"/>
</dbReference>
<dbReference type="GO" id="GO:0016324">
    <property type="term" value="C:apical plasma membrane"/>
    <property type="evidence" value="ECO:0000250"/>
    <property type="project" value="UniProtKB"/>
</dbReference>
<dbReference type="GO" id="GO:0009986">
    <property type="term" value="C:cell surface"/>
    <property type="evidence" value="ECO:0000250"/>
    <property type="project" value="UniProtKB"/>
</dbReference>
<dbReference type="GO" id="GO:0005737">
    <property type="term" value="C:cytoplasm"/>
    <property type="evidence" value="ECO:0000250"/>
    <property type="project" value="UniProtKB"/>
</dbReference>
<dbReference type="GO" id="GO:0031410">
    <property type="term" value="C:cytoplasmic vesicle"/>
    <property type="evidence" value="ECO:0007669"/>
    <property type="project" value="Ensembl"/>
</dbReference>
<dbReference type="GO" id="GO:0005794">
    <property type="term" value="C:Golgi apparatus"/>
    <property type="evidence" value="ECO:0000250"/>
    <property type="project" value="UniProtKB"/>
</dbReference>
<dbReference type="GO" id="GO:0000139">
    <property type="term" value="C:Golgi membrane"/>
    <property type="evidence" value="ECO:0007669"/>
    <property type="project" value="UniProtKB-SubCell"/>
</dbReference>
<dbReference type="GO" id="GO:0045121">
    <property type="term" value="C:membrane raft"/>
    <property type="evidence" value="ECO:0000250"/>
    <property type="project" value="UniProtKB"/>
</dbReference>
<dbReference type="GO" id="GO:0005634">
    <property type="term" value="C:nucleus"/>
    <property type="evidence" value="ECO:0000250"/>
    <property type="project" value="UniProtKB"/>
</dbReference>
<dbReference type="GO" id="GO:0048471">
    <property type="term" value="C:perinuclear region of cytoplasm"/>
    <property type="evidence" value="ECO:0007669"/>
    <property type="project" value="UniProtKB-SubCell"/>
</dbReference>
<dbReference type="GO" id="GO:0005886">
    <property type="term" value="C:plasma membrane"/>
    <property type="evidence" value="ECO:0000250"/>
    <property type="project" value="UniProtKB"/>
</dbReference>
<dbReference type="GO" id="GO:0005178">
    <property type="term" value="F:integrin binding"/>
    <property type="evidence" value="ECO:0007669"/>
    <property type="project" value="Ensembl"/>
</dbReference>
<dbReference type="GO" id="GO:0019900">
    <property type="term" value="F:kinase binding"/>
    <property type="evidence" value="ECO:0007669"/>
    <property type="project" value="Ensembl"/>
</dbReference>
<dbReference type="GO" id="GO:0007015">
    <property type="term" value="P:actin filament organization"/>
    <property type="evidence" value="ECO:0000250"/>
    <property type="project" value="UniProtKB"/>
</dbReference>
<dbReference type="GO" id="GO:0070252">
    <property type="term" value="P:actin-mediated cell contraction"/>
    <property type="evidence" value="ECO:0000250"/>
    <property type="project" value="UniProtKB"/>
</dbReference>
<dbReference type="GO" id="GO:0006915">
    <property type="term" value="P:apoptotic process"/>
    <property type="evidence" value="ECO:0000250"/>
    <property type="project" value="UniProtKB"/>
</dbReference>
<dbReference type="GO" id="GO:0032060">
    <property type="term" value="P:bleb assembly"/>
    <property type="evidence" value="ECO:0000250"/>
    <property type="project" value="UniProtKB"/>
</dbReference>
<dbReference type="GO" id="GO:0043534">
    <property type="term" value="P:blood vessel endothelial cell migration"/>
    <property type="evidence" value="ECO:0000250"/>
    <property type="project" value="UniProtKB"/>
</dbReference>
<dbReference type="GO" id="GO:0007155">
    <property type="term" value="P:cell adhesion"/>
    <property type="evidence" value="ECO:0000250"/>
    <property type="project" value="UniProtKB"/>
</dbReference>
<dbReference type="GO" id="GO:0007160">
    <property type="term" value="P:cell-matrix adhesion"/>
    <property type="evidence" value="ECO:0000250"/>
    <property type="project" value="UniProtKB"/>
</dbReference>
<dbReference type="GO" id="GO:0045022">
    <property type="term" value="P:early endosome to late endosome transport"/>
    <property type="evidence" value="ECO:0000250"/>
    <property type="project" value="UniProtKB"/>
</dbReference>
<dbReference type="GO" id="GO:0007566">
    <property type="term" value="P:embryo implantation"/>
    <property type="evidence" value="ECO:0000250"/>
    <property type="project" value="UniProtKB"/>
</dbReference>
<dbReference type="GO" id="GO:0060136">
    <property type="term" value="P:embryonic process involved in female pregnancy"/>
    <property type="evidence" value="ECO:0000250"/>
    <property type="project" value="UniProtKB"/>
</dbReference>
<dbReference type="GO" id="GO:0060914">
    <property type="term" value="P:heart formation"/>
    <property type="evidence" value="ECO:0000250"/>
    <property type="project" value="UniProtKB"/>
</dbReference>
<dbReference type="GO" id="GO:0001765">
    <property type="term" value="P:membrane raft assembly"/>
    <property type="evidence" value="ECO:0000250"/>
    <property type="project" value="UniProtKB"/>
</dbReference>
<dbReference type="GO" id="GO:0001787">
    <property type="term" value="P:natural killer cell proliferation"/>
    <property type="evidence" value="ECO:0000250"/>
    <property type="project" value="UniProtKB"/>
</dbReference>
<dbReference type="GO" id="GO:1990266">
    <property type="term" value="P:neutrophil migration"/>
    <property type="evidence" value="ECO:0000250"/>
    <property type="project" value="UniProtKB"/>
</dbReference>
<dbReference type="GO" id="GO:0044854">
    <property type="term" value="P:plasma membrane raft assembly"/>
    <property type="evidence" value="ECO:0000250"/>
    <property type="project" value="UniProtKB"/>
</dbReference>
<dbReference type="GO" id="GO:0045766">
    <property type="term" value="P:positive regulation of angiogenesis"/>
    <property type="evidence" value="ECO:0000250"/>
    <property type="project" value="UniProtKB"/>
</dbReference>
<dbReference type="GO" id="GO:0062043">
    <property type="term" value="P:positive regulation of cardiac epithelial to mesenchymal transition"/>
    <property type="evidence" value="ECO:0000250"/>
    <property type="project" value="UniProtKB"/>
</dbReference>
<dbReference type="GO" id="GO:0008284">
    <property type="term" value="P:positive regulation of cell population proliferation"/>
    <property type="evidence" value="ECO:0000250"/>
    <property type="project" value="UniProtKB"/>
</dbReference>
<dbReference type="GO" id="GO:0001954">
    <property type="term" value="P:positive regulation of cell-matrix adhesion"/>
    <property type="evidence" value="ECO:0007669"/>
    <property type="project" value="Ensembl"/>
</dbReference>
<dbReference type="GO" id="GO:2001046">
    <property type="term" value="P:positive regulation of integrin-mediated signaling pathway"/>
    <property type="evidence" value="ECO:0000318"/>
    <property type="project" value="GO_Central"/>
</dbReference>
<dbReference type="GO" id="GO:0034394">
    <property type="term" value="P:protein localization to cell surface"/>
    <property type="evidence" value="ECO:0000250"/>
    <property type="project" value="UniProtKB"/>
</dbReference>
<dbReference type="GO" id="GO:0072659">
    <property type="term" value="P:protein localization to plasma membrane"/>
    <property type="evidence" value="ECO:0000250"/>
    <property type="project" value="UniProtKB"/>
</dbReference>
<dbReference type="GO" id="GO:0045765">
    <property type="term" value="P:regulation of angiogenesis"/>
    <property type="evidence" value="ECO:0000250"/>
    <property type="project" value="UniProtKB"/>
</dbReference>
<dbReference type="GO" id="GO:0001952">
    <property type="term" value="P:regulation of cell-matrix adhesion"/>
    <property type="evidence" value="ECO:0000318"/>
    <property type="project" value="GO_Central"/>
</dbReference>
<dbReference type="GO" id="GO:0010594">
    <property type="term" value="P:regulation of endothelial cell migration"/>
    <property type="evidence" value="ECO:0000250"/>
    <property type="project" value="UniProtKB"/>
</dbReference>
<dbReference type="GO" id="GO:0003093">
    <property type="term" value="P:regulation of glomerular filtration"/>
    <property type="evidence" value="ECO:0000250"/>
    <property type="project" value="UniProtKB"/>
</dbReference>
<dbReference type="GO" id="GO:0043549">
    <property type="term" value="P:regulation of kinase activity"/>
    <property type="evidence" value="ECO:0000250"/>
    <property type="project" value="UniProtKB"/>
</dbReference>
<dbReference type="GO" id="GO:2001212">
    <property type="term" value="P:regulation of vasculogenesis"/>
    <property type="evidence" value="ECO:0000250"/>
    <property type="project" value="UniProtKB"/>
</dbReference>
<dbReference type="GO" id="GO:0001913">
    <property type="term" value="P:T cell mediated cytotoxicity"/>
    <property type="evidence" value="ECO:0000250"/>
    <property type="project" value="UniProtKB"/>
</dbReference>
<dbReference type="FunFam" id="1.20.140.150:FF:000023">
    <property type="entry name" value="Epithelial membrane protein 2"/>
    <property type="match status" value="1"/>
</dbReference>
<dbReference type="Gene3D" id="1.20.140.150">
    <property type="match status" value="1"/>
</dbReference>
<dbReference type="InterPro" id="IPR003933">
    <property type="entry name" value="EMP-2"/>
</dbReference>
<dbReference type="InterPro" id="IPR050579">
    <property type="entry name" value="PMP-22/EMP/MP20-like"/>
</dbReference>
<dbReference type="InterPro" id="IPR004031">
    <property type="entry name" value="PMP22/EMP/MP20/Claudin"/>
</dbReference>
<dbReference type="InterPro" id="IPR004032">
    <property type="entry name" value="PMP22_EMP_MP20"/>
</dbReference>
<dbReference type="PANTHER" id="PTHR10671:SF32">
    <property type="entry name" value="EPITHELIAL MEMBRANE PROTEIN 2"/>
    <property type="match status" value="1"/>
</dbReference>
<dbReference type="PANTHER" id="PTHR10671">
    <property type="entry name" value="EPITHELIAL MEMBRANE PROTEIN-RELATED"/>
    <property type="match status" value="1"/>
</dbReference>
<dbReference type="Pfam" id="PF00822">
    <property type="entry name" value="PMP22_Claudin"/>
    <property type="match status" value="1"/>
</dbReference>
<dbReference type="PRINTS" id="PR01453">
    <property type="entry name" value="EPMEMFAMILY"/>
</dbReference>
<dbReference type="PRINTS" id="PR01455">
    <property type="entry name" value="EPMEMPROT2"/>
</dbReference>
<dbReference type="PROSITE" id="PS01221">
    <property type="entry name" value="PMP22_1"/>
    <property type="match status" value="1"/>
</dbReference>
<dbReference type="PROSITE" id="PS01222">
    <property type="entry name" value="PMP22_2"/>
    <property type="match status" value="1"/>
</dbReference>
<accession>A5A6N6</accession>
<evidence type="ECO:0000250" key="1">
    <source>
        <dbReference type="UniProtKB" id="F1QIK8"/>
    </source>
</evidence>
<evidence type="ECO:0000250" key="2">
    <source>
        <dbReference type="UniProtKB" id="O88662"/>
    </source>
</evidence>
<evidence type="ECO:0000250" key="3">
    <source>
        <dbReference type="UniProtKB" id="P54851"/>
    </source>
</evidence>
<evidence type="ECO:0000250" key="4">
    <source>
        <dbReference type="UniProtKB" id="Q66HH2"/>
    </source>
</evidence>
<evidence type="ECO:0000255" key="5"/>
<evidence type="ECO:0000305" key="6"/>
<name>EMP2_PANTR</name>
<organism>
    <name type="scientific">Pan troglodytes</name>
    <name type="common">Chimpanzee</name>
    <dbReference type="NCBI Taxonomy" id="9598"/>
    <lineage>
        <taxon>Eukaryota</taxon>
        <taxon>Metazoa</taxon>
        <taxon>Chordata</taxon>
        <taxon>Craniata</taxon>
        <taxon>Vertebrata</taxon>
        <taxon>Euteleostomi</taxon>
        <taxon>Mammalia</taxon>
        <taxon>Eutheria</taxon>
        <taxon>Euarchontoglires</taxon>
        <taxon>Primates</taxon>
        <taxon>Haplorrhini</taxon>
        <taxon>Catarrhini</taxon>
        <taxon>Hominidae</taxon>
        <taxon>Pan</taxon>
    </lineage>
</organism>